<evidence type="ECO:0000255" key="1">
    <source>
        <dbReference type="HAMAP-Rule" id="MF_00382"/>
    </source>
</evidence>
<evidence type="ECO:0000305" key="2"/>
<proteinExistence type="inferred from homology"/>
<name>RL20_NEOSM</name>
<accession>Q2GEI6</accession>
<reference key="1">
    <citation type="journal article" date="2006" name="PLoS Genet.">
        <title>Comparative genomics of emerging human ehrlichiosis agents.</title>
        <authorList>
            <person name="Dunning Hotopp J.C."/>
            <person name="Lin M."/>
            <person name="Madupu R."/>
            <person name="Crabtree J."/>
            <person name="Angiuoli S.V."/>
            <person name="Eisen J.A."/>
            <person name="Seshadri R."/>
            <person name="Ren Q."/>
            <person name="Wu M."/>
            <person name="Utterback T.R."/>
            <person name="Smith S."/>
            <person name="Lewis M."/>
            <person name="Khouri H."/>
            <person name="Zhang C."/>
            <person name="Niu H."/>
            <person name="Lin Q."/>
            <person name="Ohashi N."/>
            <person name="Zhi N."/>
            <person name="Nelson W.C."/>
            <person name="Brinkac L.M."/>
            <person name="Dodson R.J."/>
            <person name="Rosovitz M.J."/>
            <person name="Sundaram J.P."/>
            <person name="Daugherty S.C."/>
            <person name="Davidsen T."/>
            <person name="Durkin A.S."/>
            <person name="Gwinn M.L."/>
            <person name="Haft D.H."/>
            <person name="Selengut J.D."/>
            <person name="Sullivan S.A."/>
            <person name="Zafar N."/>
            <person name="Zhou L."/>
            <person name="Benahmed F."/>
            <person name="Forberger H."/>
            <person name="Halpin R."/>
            <person name="Mulligan S."/>
            <person name="Robinson J."/>
            <person name="White O."/>
            <person name="Rikihisa Y."/>
            <person name="Tettelin H."/>
        </authorList>
    </citation>
    <scope>NUCLEOTIDE SEQUENCE [LARGE SCALE GENOMIC DNA]</scope>
    <source>
        <strain>ATCC VR-367 / Miyayama</strain>
    </source>
</reference>
<gene>
    <name evidence="1" type="primary">rplT</name>
    <name type="ordered locus">NSE_0215</name>
</gene>
<sequence length="117" mass="13561">MARVKRGVQVRQRHKKVIKQAKGFHGRSKNCYRIALRRLEKSWQYAYRDRKVRKRDFRSLWIQRINAAVRSFGLVYSVFMKGLKAAGVDVNRKVLSELAISQPSAFGEIVNKAKAAL</sequence>
<comment type="function">
    <text evidence="1">Binds directly to 23S ribosomal RNA and is necessary for the in vitro assembly process of the 50S ribosomal subunit. It is not involved in the protein synthesizing functions of that subunit.</text>
</comment>
<comment type="similarity">
    <text evidence="1">Belongs to the bacterial ribosomal protein bL20 family.</text>
</comment>
<protein>
    <recommendedName>
        <fullName evidence="1">Large ribosomal subunit protein bL20</fullName>
    </recommendedName>
    <alternativeName>
        <fullName evidence="2">50S ribosomal protein L20</fullName>
    </alternativeName>
</protein>
<keyword id="KW-0687">Ribonucleoprotein</keyword>
<keyword id="KW-0689">Ribosomal protein</keyword>
<keyword id="KW-0694">RNA-binding</keyword>
<keyword id="KW-0699">rRNA-binding</keyword>
<dbReference type="EMBL" id="CP000237">
    <property type="protein sequence ID" value="ABD46220.1"/>
    <property type="molecule type" value="Genomic_DNA"/>
</dbReference>
<dbReference type="RefSeq" id="WP_011451616.1">
    <property type="nucleotide sequence ID" value="NC_007798.1"/>
</dbReference>
<dbReference type="SMR" id="Q2GEI6"/>
<dbReference type="STRING" id="222891.NSE_0215"/>
<dbReference type="KEGG" id="nse:NSE_0215"/>
<dbReference type="eggNOG" id="COG0292">
    <property type="taxonomic scope" value="Bacteria"/>
</dbReference>
<dbReference type="HOGENOM" id="CLU_123265_0_1_5"/>
<dbReference type="OrthoDB" id="9808966at2"/>
<dbReference type="Proteomes" id="UP000001942">
    <property type="component" value="Chromosome"/>
</dbReference>
<dbReference type="GO" id="GO:1990904">
    <property type="term" value="C:ribonucleoprotein complex"/>
    <property type="evidence" value="ECO:0007669"/>
    <property type="project" value="UniProtKB-KW"/>
</dbReference>
<dbReference type="GO" id="GO:0005840">
    <property type="term" value="C:ribosome"/>
    <property type="evidence" value="ECO:0007669"/>
    <property type="project" value="UniProtKB-KW"/>
</dbReference>
<dbReference type="GO" id="GO:0019843">
    <property type="term" value="F:rRNA binding"/>
    <property type="evidence" value="ECO:0007669"/>
    <property type="project" value="UniProtKB-UniRule"/>
</dbReference>
<dbReference type="GO" id="GO:0003735">
    <property type="term" value="F:structural constituent of ribosome"/>
    <property type="evidence" value="ECO:0007669"/>
    <property type="project" value="InterPro"/>
</dbReference>
<dbReference type="GO" id="GO:0000027">
    <property type="term" value="P:ribosomal large subunit assembly"/>
    <property type="evidence" value="ECO:0007669"/>
    <property type="project" value="UniProtKB-UniRule"/>
</dbReference>
<dbReference type="GO" id="GO:0006412">
    <property type="term" value="P:translation"/>
    <property type="evidence" value="ECO:0007669"/>
    <property type="project" value="InterPro"/>
</dbReference>
<dbReference type="CDD" id="cd07026">
    <property type="entry name" value="Ribosomal_L20"/>
    <property type="match status" value="1"/>
</dbReference>
<dbReference type="FunFam" id="1.10.1900.20:FF:000001">
    <property type="entry name" value="50S ribosomal protein L20"/>
    <property type="match status" value="1"/>
</dbReference>
<dbReference type="Gene3D" id="6.10.160.10">
    <property type="match status" value="1"/>
</dbReference>
<dbReference type="Gene3D" id="1.10.1900.20">
    <property type="entry name" value="Ribosomal protein L20"/>
    <property type="match status" value="1"/>
</dbReference>
<dbReference type="HAMAP" id="MF_00382">
    <property type="entry name" value="Ribosomal_bL20"/>
    <property type="match status" value="1"/>
</dbReference>
<dbReference type="InterPro" id="IPR005813">
    <property type="entry name" value="Ribosomal_bL20"/>
</dbReference>
<dbReference type="InterPro" id="IPR049946">
    <property type="entry name" value="RIBOSOMAL_L20_CS"/>
</dbReference>
<dbReference type="InterPro" id="IPR035566">
    <property type="entry name" value="Ribosomal_protein_bL20_C"/>
</dbReference>
<dbReference type="NCBIfam" id="TIGR01032">
    <property type="entry name" value="rplT_bact"/>
    <property type="match status" value="1"/>
</dbReference>
<dbReference type="PANTHER" id="PTHR10986">
    <property type="entry name" value="39S RIBOSOMAL PROTEIN L20"/>
    <property type="match status" value="1"/>
</dbReference>
<dbReference type="Pfam" id="PF00453">
    <property type="entry name" value="Ribosomal_L20"/>
    <property type="match status" value="1"/>
</dbReference>
<dbReference type="PRINTS" id="PR00062">
    <property type="entry name" value="RIBOSOMALL20"/>
</dbReference>
<dbReference type="SUPFAM" id="SSF74731">
    <property type="entry name" value="Ribosomal protein L20"/>
    <property type="match status" value="1"/>
</dbReference>
<dbReference type="PROSITE" id="PS00937">
    <property type="entry name" value="RIBOSOMAL_L20"/>
    <property type="match status" value="1"/>
</dbReference>
<feature type="chain" id="PRO_0000243705" description="Large ribosomal subunit protein bL20">
    <location>
        <begin position="1"/>
        <end position="117"/>
    </location>
</feature>
<organism>
    <name type="scientific">Neorickettsia sennetsu (strain ATCC VR-367 / Miyayama)</name>
    <name type="common">Ehrlichia sennetsu</name>
    <dbReference type="NCBI Taxonomy" id="222891"/>
    <lineage>
        <taxon>Bacteria</taxon>
        <taxon>Pseudomonadati</taxon>
        <taxon>Pseudomonadota</taxon>
        <taxon>Alphaproteobacteria</taxon>
        <taxon>Rickettsiales</taxon>
        <taxon>Anaplasmataceae</taxon>
        <taxon>Neorickettsia</taxon>
    </lineage>
</organism>